<organism>
    <name type="scientific">Granulibacter bethesdensis (strain ATCC BAA-1260 / CGDNIH1)</name>
    <dbReference type="NCBI Taxonomy" id="391165"/>
    <lineage>
        <taxon>Bacteria</taxon>
        <taxon>Pseudomonadati</taxon>
        <taxon>Pseudomonadota</taxon>
        <taxon>Alphaproteobacteria</taxon>
        <taxon>Acetobacterales</taxon>
        <taxon>Acetobacteraceae</taxon>
        <taxon>Granulibacter</taxon>
    </lineage>
</organism>
<keyword id="KW-0963">Cytoplasm</keyword>
<keyword id="KW-0489">Methyltransferase</keyword>
<keyword id="KW-1185">Reference proteome</keyword>
<keyword id="KW-0698">rRNA processing</keyword>
<keyword id="KW-0949">S-adenosyl-L-methionine</keyword>
<keyword id="KW-0808">Transferase</keyword>
<sequence>MSGGKTQPPTGPRGKVVMLKTARKRSVASQRWLTRQLNDPYVAAAKAQGWRSRAAFKLIELDDKFGLISKGSRVIDLGAAPGGWTQVAMKRGAAVVVGVDLLPVDPVPGATLIQGDFNDDDMPARLSSLMGGKADLVMSDMAPNTTGHAATDHMRIIALTELALHFAFDALAPGGAFVAKVFQGGSEKQLLEPMKQRFASVRHAKPASSRKESSELYVVAKGFRPNGLQD</sequence>
<protein>
    <recommendedName>
        <fullName evidence="1">Ribosomal RNA large subunit methyltransferase E</fullName>
        <ecNumber evidence="1">2.1.1.166</ecNumber>
    </recommendedName>
    <alternativeName>
        <fullName evidence="1">23S rRNA Um2552 methyltransferase</fullName>
    </alternativeName>
    <alternativeName>
        <fullName evidence="1">rRNA (uridine-2'-O-)-methyltransferase</fullName>
    </alternativeName>
</protein>
<dbReference type="EC" id="2.1.1.166" evidence="1"/>
<dbReference type="EMBL" id="CP000394">
    <property type="protein sequence ID" value="ABI62044.1"/>
    <property type="molecule type" value="Genomic_DNA"/>
</dbReference>
<dbReference type="RefSeq" id="WP_011631853.1">
    <property type="nucleotide sequence ID" value="NC_008343.2"/>
</dbReference>
<dbReference type="SMR" id="Q0BT08"/>
<dbReference type="STRING" id="391165.GbCGDNIH1_1146"/>
<dbReference type="GeneID" id="69745414"/>
<dbReference type="KEGG" id="gbe:GbCGDNIH1_1146"/>
<dbReference type="eggNOG" id="COG0293">
    <property type="taxonomic scope" value="Bacteria"/>
</dbReference>
<dbReference type="HOGENOM" id="CLU_009422_4_2_5"/>
<dbReference type="OrthoDB" id="9790080at2"/>
<dbReference type="Proteomes" id="UP000001963">
    <property type="component" value="Chromosome"/>
</dbReference>
<dbReference type="GO" id="GO:0005737">
    <property type="term" value="C:cytoplasm"/>
    <property type="evidence" value="ECO:0007669"/>
    <property type="project" value="UniProtKB-SubCell"/>
</dbReference>
<dbReference type="GO" id="GO:0008650">
    <property type="term" value="F:rRNA (uridine-2'-O-)-methyltransferase activity"/>
    <property type="evidence" value="ECO:0007669"/>
    <property type="project" value="UniProtKB-UniRule"/>
</dbReference>
<dbReference type="Gene3D" id="3.40.50.150">
    <property type="entry name" value="Vaccinia Virus protein VP39"/>
    <property type="match status" value="1"/>
</dbReference>
<dbReference type="HAMAP" id="MF_01547">
    <property type="entry name" value="RNA_methyltr_E"/>
    <property type="match status" value="1"/>
</dbReference>
<dbReference type="InterPro" id="IPR050082">
    <property type="entry name" value="RNA_methyltr_RlmE"/>
</dbReference>
<dbReference type="InterPro" id="IPR002877">
    <property type="entry name" value="RNA_MeTrfase_FtsJ_dom"/>
</dbReference>
<dbReference type="InterPro" id="IPR015507">
    <property type="entry name" value="rRNA-MeTfrase_E"/>
</dbReference>
<dbReference type="InterPro" id="IPR029063">
    <property type="entry name" value="SAM-dependent_MTases_sf"/>
</dbReference>
<dbReference type="PANTHER" id="PTHR10920">
    <property type="entry name" value="RIBOSOMAL RNA METHYLTRANSFERASE"/>
    <property type="match status" value="1"/>
</dbReference>
<dbReference type="PANTHER" id="PTHR10920:SF18">
    <property type="entry name" value="RRNA METHYLTRANSFERASE 2, MITOCHONDRIAL"/>
    <property type="match status" value="1"/>
</dbReference>
<dbReference type="Pfam" id="PF01728">
    <property type="entry name" value="FtsJ"/>
    <property type="match status" value="1"/>
</dbReference>
<dbReference type="PIRSF" id="PIRSF005461">
    <property type="entry name" value="23S_rRNA_mtase"/>
    <property type="match status" value="1"/>
</dbReference>
<dbReference type="SUPFAM" id="SSF53335">
    <property type="entry name" value="S-adenosyl-L-methionine-dependent methyltransferases"/>
    <property type="match status" value="1"/>
</dbReference>
<comment type="function">
    <text evidence="1">Specifically methylates the uridine in position 2552 of 23S rRNA at the 2'-O position of the ribose in the fully assembled 50S ribosomal subunit.</text>
</comment>
<comment type="catalytic activity">
    <reaction evidence="1">
        <text>uridine(2552) in 23S rRNA + S-adenosyl-L-methionine = 2'-O-methyluridine(2552) in 23S rRNA + S-adenosyl-L-homocysteine + H(+)</text>
        <dbReference type="Rhea" id="RHEA:42720"/>
        <dbReference type="Rhea" id="RHEA-COMP:10202"/>
        <dbReference type="Rhea" id="RHEA-COMP:10203"/>
        <dbReference type="ChEBI" id="CHEBI:15378"/>
        <dbReference type="ChEBI" id="CHEBI:57856"/>
        <dbReference type="ChEBI" id="CHEBI:59789"/>
        <dbReference type="ChEBI" id="CHEBI:65315"/>
        <dbReference type="ChEBI" id="CHEBI:74478"/>
        <dbReference type="EC" id="2.1.1.166"/>
    </reaction>
</comment>
<comment type="subcellular location">
    <subcellularLocation>
        <location evidence="1">Cytoplasm</location>
    </subcellularLocation>
</comment>
<comment type="similarity">
    <text evidence="1">Belongs to the class I-like SAM-binding methyltransferase superfamily. RNA methyltransferase RlmE family.</text>
</comment>
<evidence type="ECO:0000255" key="1">
    <source>
        <dbReference type="HAMAP-Rule" id="MF_01547"/>
    </source>
</evidence>
<proteinExistence type="inferred from homology"/>
<name>RLME_GRABC</name>
<accession>Q0BT08</accession>
<gene>
    <name evidence="1" type="primary">rlmE</name>
    <name evidence="1" type="synonym">ftsJ</name>
    <name evidence="1" type="synonym">rrmJ</name>
    <name type="ordered locus">GbCGDNIH1_1146</name>
</gene>
<feature type="chain" id="PRO_0000282750" description="Ribosomal RNA large subunit methyltransferase E">
    <location>
        <begin position="1"/>
        <end position="230"/>
    </location>
</feature>
<feature type="active site" description="Proton acceptor" evidence="1">
    <location>
        <position position="180"/>
    </location>
</feature>
<feature type="binding site" evidence="1">
    <location>
        <position position="82"/>
    </location>
    <ligand>
        <name>S-adenosyl-L-methionine</name>
        <dbReference type="ChEBI" id="CHEBI:59789"/>
    </ligand>
</feature>
<feature type="binding site" evidence="1">
    <location>
        <position position="84"/>
    </location>
    <ligand>
        <name>S-adenosyl-L-methionine</name>
        <dbReference type="ChEBI" id="CHEBI:59789"/>
    </ligand>
</feature>
<feature type="binding site" evidence="1">
    <location>
        <position position="100"/>
    </location>
    <ligand>
        <name>S-adenosyl-L-methionine</name>
        <dbReference type="ChEBI" id="CHEBI:59789"/>
    </ligand>
</feature>
<feature type="binding site" evidence="1">
    <location>
        <position position="116"/>
    </location>
    <ligand>
        <name>S-adenosyl-L-methionine</name>
        <dbReference type="ChEBI" id="CHEBI:59789"/>
    </ligand>
</feature>
<feature type="binding site" evidence="1">
    <location>
        <position position="140"/>
    </location>
    <ligand>
        <name>S-adenosyl-L-methionine</name>
        <dbReference type="ChEBI" id="CHEBI:59789"/>
    </ligand>
</feature>
<reference key="1">
    <citation type="journal article" date="2007" name="J. Bacteriol.">
        <title>Genome sequence analysis of the emerging human pathogenic acetic acid bacterium Granulibacter bethesdensis.</title>
        <authorList>
            <person name="Greenberg D.E."/>
            <person name="Porcella S.F."/>
            <person name="Zelazny A.M."/>
            <person name="Virtaneva K."/>
            <person name="Sturdevant D.E."/>
            <person name="Kupko J.J. III"/>
            <person name="Barbian K.D."/>
            <person name="Babar A."/>
            <person name="Dorward D.W."/>
            <person name="Holland S.M."/>
        </authorList>
    </citation>
    <scope>NUCLEOTIDE SEQUENCE [LARGE SCALE GENOMIC DNA]</scope>
    <source>
        <strain>ATCC BAA-1260 / CGDNIH1</strain>
    </source>
</reference>